<proteinExistence type="inferred from homology"/>
<comment type="similarity">
    <text evidence="1">Belongs to the UPF0301 (AlgH) family.</text>
</comment>
<accession>B0UWW1</accession>
<name>Y1900_HISS2</name>
<reference key="1">
    <citation type="submission" date="2008-02" db="EMBL/GenBank/DDBJ databases">
        <title>Complete sequence of Haemophilus somnus 2336.</title>
        <authorList>
            <consortium name="US DOE Joint Genome Institute"/>
            <person name="Siddaramappa S."/>
            <person name="Duncan A.J."/>
            <person name="Challacombe J.F."/>
            <person name="Rainey D."/>
            <person name="Gillaspy A.F."/>
            <person name="Carson M."/>
            <person name="Gipson J."/>
            <person name="Gipson M."/>
            <person name="Bruce D."/>
            <person name="Detter J.C."/>
            <person name="Han C.S."/>
            <person name="Land M."/>
            <person name="Tapia R."/>
            <person name="Thompson L.S."/>
            <person name="Orvis J."/>
            <person name="Zaitshik J."/>
            <person name="Barnes G."/>
            <person name="Brettin T.S."/>
            <person name="Dyer D.W."/>
            <person name="Inzana T.J."/>
        </authorList>
    </citation>
    <scope>NUCLEOTIDE SEQUENCE [LARGE SCALE GENOMIC DNA]</scope>
    <source>
        <strain>2336</strain>
    </source>
</reference>
<evidence type="ECO:0000255" key="1">
    <source>
        <dbReference type="HAMAP-Rule" id="MF_00758"/>
    </source>
</evidence>
<feature type="chain" id="PRO_1000148385" description="UPF0301 protein HSM_1900">
    <location>
        <begin position="1"/>
        <end position="187"/>
    </location>
</feature>
<gene>
    <name type="ordered locus">HSM_1900</name>
</gene>
<sequence length="187" mass="21404">MNLQDHFLIAMPHLEDENFQRSVVYICENNEQGSMGLVLTQATDLSIAELCAKMNFMMADEREYSDKLVLLGGPVNLEHGFILHKKTAQEFQHSYKVTDQIYLTTSADIINTFGTAQSPEKYLVTLGCARWEPNQLENEIANNDWLVVPADENILFDVNSSERWFAANQLLGIEHVNFSYQQQMEHS</sequence>
<organism>
    <name type="scientific">Histophilus somni (strain 2336)</name>
    <name type="common">Haemophilus somnus</name>
    <dbReference type="NCBI Taxonomy" id="228400"/>
    <lineage>
        <taxon>Bacteria</taxon>
        <taxon>Pseudomonadati</taxon>
        <taxon>Pseudomonadota</taxon>
        <taxon>Gammaproteobacteria</taxon>
        <taxon>Pasteurellales</taxon>
        <taxon>Pasteurellaceae</taxon>
        <taxon>Histophilus</taxon>
    </lineage>
</organism>
<dbReference type="EMBL" id="CP000947">
    <property type="protein sequence ID" value="ACA31689.1"/>
    <property type="molecule type" value="Genomic_DNA"/>
</dbReference>
<dbReference type="RefSeq" id="WP_012340984.1">
    <property type="nucleotide sequence ID" value="NC_010519.1"/>
</dbReference>
<dbReference type="SMR" id="B0UWW1"/>
<dbReference type="STRING" id="228400.HSM_1900"/>
<dbReference type="GeneID" id="31488211"/>
<dbReference type="KEGG" id="hsm:HSM_1900"/>
<dbReference type="HOGENOM" id="CLU_057596_1_0_6"/>
<dbReference type="GO" id="GO:0005829">
    <property type="term" value="C:cytosol"/>
    <property type="evidence" value="ECO:0007669"/>
    <property type="project" value="TreeGrafter"/>
</dbReference>
<dbReference type="Gene3D" id="3.40.1740.10">
    <property type="entry name" value="VC0467-like"/>
    <property type="match status" value="1"/>
</dbReference>
<dbReference type="Gene3D" id="3.30.70.1300">
    <property type="entry name" value="VC0467-like domains"/>
    <property type="match status" value="1"/>
</dbReference>
<dbReference type="HAMAP" id="MF_00758">
    <property type="entry name" value="UPF0301"/>
    <property type="match status" value="1"/>
</dbReference>
<dbReference type="InterPro" id="IPR003774">
    <property type="entry name" value="AlgH-like"/>
</dbReference>
<dbReference type="NCBIfam" id="NF001266">
    <property type="entry name" value="PRK00228.1-1"/>
    <property type="match status" value="1"/>
</dbReference>
<dbReference type="PANTHER" id="PTHR30327">
    <property type="entry name" value="UNCHARACTERIZED PROTEIN YQGE"/>
    <property type="match status" value="1"/>
</dbReference>
<dbReference type="PANTHER" id="PTHR30327:SF1">
    <property type="entry name" value="UPF0301 PROTEIN YQGE"/>
    <property type="match status" value="1"/>
</dbReference>
<dbReference type="Pfam" id="PF02622">
    <property type="entry name" value="DUF179"/>
    <property type="match status" value="1"/>
</dbReference>
<dbReference type="SUPFAM" id="SSF143456">
    <property type="entry name" value="VC0467-like"/>
    <property type="match status" value="1"/>
</dbReference>
<protein>
    <recommendedName>
        <fullName evidence="1">UPF0301 protein HSM_1900</fullName>
    </recommendedName>
</protein>